<keyword id="KW-0521">NADP</keyword>
<keyword id="KW-0560">Oxidoreductase</keyword>
<keyword id="KW-0627">Porphyrin biosynthesis</keyword>
<protein>
    <recommendedName>
        <fullName evidence="1">Glutamyl-tRNA reductase</fullName>
        <shortName evidence="1">GluTR</shortName>
        <ecNumber evidence="1">1.2.1.70</ecNumber>
    </recommendedName>
</protein>
<reference key="1">
    <citation type="journal article" date="2011" name="J. Bacteriol.">
        <title>Comparative genomics of 28 Salmonella enterica isolates: evidence for CRISPR-mediated adaptive sublineage evolution.</title>
        <authorList>
            <person name="Fricke W.F."/>
            <person name="Mammel M.K."/>
            <person name="McDermott P.F."/>
            <person name="Tartera C."/>
            <person name="White D.G."/>
            <person name="Leclerc J.E."/>
            <person name="Ravel J."/>
            <person name="Cebula T.A."/>
        </authorList>
    </citation>
    <scope>NUCLEOTIDE SEQUENCE [LARGE SCALE GENOMIC DNA]</scope>
    <source>
        <strain>SL476</strain>
    </source>
</reference>
<name>HEM1_SALHS</name>
<evidence type="ECO:0000255" key="1">
    <source>
        <dbReference type="HAMAP-Rule" id="MF_00087"/>
    </source>
</evidence>
<gene>
    <name evidence="1" type="primary">hemA</name>
    <name type="ordered locus">SeHA_C1972</name>
</gene>
<dbReference type="EC" id="1.2.1.70" evidence="1"/>
<dbReference type="EMBL" id="CP001120">
    <property type="protein sequence ID" value="ACF67150.1"/>
    <property type="molecule type" value="Genomic_DNA"/>
</dbReference>
<dbReference type="RefSeq" id="WP_000173208.1">
    <property type="nucleotide sequence ID" value="NC_011083.1"/>
</dbReference>
<dbReference type="SMR" id="B4TKA5"/>
<dbReference type="KEGG" id="seh:SeHA_C1972"/>
<dbReference type="HOGENOM" id="CLU_035113_2_2_6"/>
<dbReference type="UniPathway" id="UPA00251">
    <property type="reaction ID" value="UER00316"/>
</dbReference>
<dbReference type="Proteomes" id="UP000001866">
    <property type="component" value="Chromosome"/>
</dbReference>
<dbReference type="GO" id="GO:0008883">
    <property type="term" value="F:glutamyl-tRNA reductase activity"/>
    <property type="evidence" value="ECO:0007669"/>
    <property type="project" value="UniProtKB-UniRule"/>
</dbReference>
<dbReference type="GO" id="GO:0050661">
    <property type="term" value="F:NADP binding"/>
    <property type="evidence" value="ECO:0007669"/>
    <property type="project" value="InterPro"/>
</dbReference>
<dbReference type="GO" id="GO:0019353">
    <property type="term" value="P:protoporphyrinogen IX biosynthetic process from glutamate"/>
    <property type="evidence" value="ECO:0007669"/>
    <property type="project" value="TreeGrafter"/>
</dbReference>
<dbReference type="CDD" id="cd05213">
    <property type="entry name" value="NAD_bind_Glutamyl_tRNA_reduct"/>
    <property type="match status" value="1"/>
</dbReference>
<dbReference type="FunFam" id="3.30.460.30:FF:000001">
    <property type="entry name" value="Glutamyl-tRNA reductase"/>
    <property type="match status" value="1"/>
</dbReference>
<dbReference type="FunFam" id="3.40.50.720:FF:000031">
    <property type="entry name" value="Glutamyl-tRNA reductase"/>
    <property type="match status" value="1"/>
</dbReference>
<dbReference type="Gene3D" id="3.30.460.30">
    <property type="entry name" value="Glutamyl-tRNA reductase, N-terminal domain"/>
    <property type="match status" value="1"/>
</dbReference>
<dbReference type="Gene3D" id="3.40.50.720">
    <property type="entry name" value="NAD(P)-binding Rossmann-like Domain"/>
    <property type="match status" value="1"/>
</dbReference>
<dbReference type="HAMAP" id="MF_00087">
    <property type="entry name" value="Glu_tRNA_reductase"/>
    <property type="match status" value="1"/>
</dbReference>
<dbReference type="InterPro" id="IPR000343">
    <property type="entry name" value="4pyrrol_synth_GluRdtase"/>
</dbReference>
<dbReference type="InterPro" id="IPR015896">
    <property type="entry name" value="4pyrrol_synth_GluRdtase_dimer"/>
</dbReference>
<dbReference type="InterPro" id="IPR015895">
    <property type="entry name" value="4pyrrol_synth_GluRdtase_N"/>
</dbReference>
<dbReference type="InterPro" id="IPR018214">
    <property type="entry name" value="GluRdtase_CS"/>
</dbReference>
<dbReference type="InterPro" id="IPR036453">
    <property type="entry name" value="GluRdtase_dimer_dom_sf"/>
</dbReference>
<dbReference type="InterPro" id="IPR036343">
    <property type="entry name" value="GluRdtase_N_sf"/>
</dbReference>
<dbReference type="InterPro" id="IPR036291">
    <property type="entry name" value="NAD(P)-bd_dom_sf"/>
</dbReference>
<dbReference type="InterPro" id="IPR006151">
    <property type="entry name" value="Shikm_DH/Glu-tRNA_Rdtase"/>
</dbReference>
<dbReference type="NCBIfam" id="TIGR01035">
    <property type="entry name" value="hemA"/>
    <property type="match status" value="1"/>
</dbReference>
<dbReference type="PANTHER" id="PTHR43013">
    <property type="entry name" value="GLUTAMYL-TRNA REDUCTASE"/>
    <property type="match status" value="1"/>
</dbReference>
<dbReference type="PANTHER" id="PTHR43013:SF1">
    <property type="entry name" value="GLUTAMYL-TRNA REDUCTASE"/>
    <property type="match status" value="1"/>
</dbReference>
<dbReference type="Pfam" id="PF00745">
    <property type="entry name" value="GlutR_dimer"/>
    <property type="match status" value="1"/>
</dbReference>
<dbReference type="Pfam" id="PF05201">
    <property type="entry name" value="GlutR_N"/>
    <property type="match status" value="1"/>
</dbReference>
<dbReference type="Pfam" id="PF01488">
    <property type="entry name" value="Shikimate_DH"/>
    <property type="match status" value="1"/>
</dbReference>
<dbReference type="PIRSF" id="PIRSF000445">
    <property type="entry name" value="4pyrrol_synth_GluRdtase"/>
    <property type="match status" value="1"/>
</dbReference>
<dbReference type="SUPFAM" id="SSF69742">
    <property type="entry name" value="Glutamyl tRNA-reductase catalytic, N-terminal domain"/>
    <property type="match status" value="1"/>
</dbReference>
<dbReference type="SUPFAM" id="SSF69075">
    <property type="entry name" value="Glutamyl tRNA-reductase dimerization domain"/>
    <property type="match status" value="1"/>
</dbReference>
<dbReference type="SUPFAM" id="SSF51735">
    <property type="entry name" value="NAD(P)-binding Rossmann-fold domains"/>
    <property type="match status" value="1"/>
</dbReference>
<dbReference type="PROSITE" id="PS00747">
    <property type="entry name" value="GLUTR"/>
    <property type="match status" value="1"/>
</dbReference>
<feature type="chain" id="PRO_1000093165" description="Glutamyl-tRNA reductase">
    <location>
        <begin position="1"/>
        <end position="418"/>
    </location>
</feature>
<feature type="active site" description="Nucleophile" evidence="1">
    <location>
        <position position="50"/>
    </location>
</feature>
<feature type="binding site" evidence="1">
    <location>
        <begin position="49"/>
        <end position="52"/>
    </location>
    <ligand>
        <name>substrate</name>
    </ligand>
</feature>
<feature type="binding site" evidence="1">
    <location>
        <position position="109"/>
    </location>
    <ligand>
        <name>substrate</name>
    </ligand>
</feature>
<feature type="binding site" evidence="1">
    <location>
        <begin position="114"/>
        <end position="116"/>
    </location>
    <ligand>
        <name>substrate</name>
    </ligand>
</feature>
<feature type="binding site" evidence="1">
    <location>
        <position position="120"/>
    </location>
    <ligand>
        <name>substrate</name>
    </ligand>
</feature>
<feature type="binding site" evidence="1">
    <location>
        <begin position="189"/>
        <end position="194"/>
    </location>
    <ligand>
        <name>NADP(+)</name>
        <dbReference type="ChEBI" id="CHEBI:58349"/>
    </ligand>
</feature>
<feature type="site" description="Important for activity" evidence="1">
    <location>
        <position position="99"/>
    </location>
</feature>
<proteinExistence type="inferred from homology"/>
<accession>B4TKA5</accession>
<organism>
    <name type="scientific">Salmonella heidelberg (strain SL476)</name>
    <dbReference type="NCBI Taxonomy" id="454169"/>
    <lineage>
        <taxon>Bacteria</taxon>
        <taxon>Pseudomonadati</taxon>
        <taxon>Pseudomonadota</taxon>
        <taxon>Gammaproteobacteria</taxon>
        <taxon>Enterobacterales</taxon>
        <taxon>Enterobacteriaceae</taxon>
        <taxon>Salmonella</taxon>
    </lineage>
</organism>
<sequence>MTLLALGINHKTAPVSLRERVTFSPDTLDQALDSLLAQPMVQGGVVLSTCNRTELYLSVEEQDNLQEALIRWLCDYHNLNEDDLRNSLYWHQDNDAVSHLMRVASGLDSLVLGEPQILGQVKKAFADSQKGHLNASALERMFQKSFSVAKRVRTETDIGASAVSVAFAACTLARQIFESLSTVTVLLVGAGETIELVARHLREHKVQKMIIANRTRERAQALADEVGAEVISLSDIDARLQDADIIISSTASPLPIIGKGMVERALKSRRNQPMLLVDIAVPRDVEPEVGKLANAYLYSVDDLQSIISHNLAQRQAAAVEAETIVEQEASEFMAWLRAQGASETIREYRSQSEQIRDELTTKALSALQQGGDAQAILQDLAWKLTNRLIHAPTKSLQQAARDGDDERLNILRDSLGLE</sequence>
<comment type="function">
    <text evidence="1">Catalyzes the NADPH-dependent reduction of glutamyl-tRNA(Glu) to glutamate 1-semialdehyde (GSA).</text>
</comment>
<comment type="catalytic activity">
    <reaction evidence="1">
        <text>(S)-4-amino-5-oxopentanoate + tRNA(Glu) + NADP(+) = L-glutamyl-tRNA(Glu) + NADPH + H(+)</text>
        <dbReference type="Rhea" id="RHEA:12344"/>
        <dbReference type="Rhea" id="RHEA-COMP:9663"/>
        <dbReference type="Rhea" id="RHEA-COMP:9680"/>
        <dbReference type="ChEBI" id="CHEBI:15378"/>
        <dbReference type="ChEBI" id="CHEBI:57501"/>
        <dbReference type="ChEBI" id="CHEBI:57783"/>
        <dbReference type="ChEBI" id="CHEBI:58349"/>
        <dbReference type="ChEBI" id="CHEBI:78442"/>
        <dbReference type="ChEBI" id="CHEBI:78520"/>
        <dbReference type="EC" id="1.2.1.70"/>
    </reaction>
</comment>
<comment type="pathway">
    <text evidence="1">Porphyrin-containing compound metabolism; protoporphyrin-IX biosynthesis; 5-aminolevulinate from L-glutamyl-tRNA(Glu): step 1/2.</text>
</comment>
<comment type="subunit">
    <text evidence="1">Homodimer.</text>
</comment>
<comment type="domain">
    <text evidence="1">Possesses an unusual extended V-shaped dimeric structure with each monomer consisting of three distinct domains arranged along a curved 'spinal' alpha-helix. The N-terminal catalytic domain specifically recognizes the glutamate moiety of the substrate. The second domain is the NADPH-binding domain, and the third C-terminal domain is responsible for dimerization.</text>
</comment>
<comment type="miscellaneous">
    <text evidence="1">During catalysis, the active site Cys acts as a nucleophile attacking the alpha-carbonyl group of tRNA-bound glutamate with the formation of a thioester intermediate between enzyme and glutamate, and the concomitant release of tRNA(Glu). The thioester intermediate is finally reduced by direct hydride transfer from NADPH, to form the product GSA.</text>
</comment>
<comment type="similarity">
    <text evidence="1">Belongs to the glutamyl-tRNA reductase family.</text>
</comment>